<keyword id="KW-1185">Reference proteome</keyword>
<keyword id="KW-0678">Repressor</keyword>
<keyword id="KW-0687">Ribonucleoprotein</keyword>
<keyword id="KW-0689">Ribosomal protein</keyword>
<keyword id="KW-0694">RNA-binding</keyword>
<keyword id="KW-0699">rRNA-binding</keyword>
<keyword id="KW-0810">Translation regulation</keyword>
<keyword id="KW-0820">tRNA-binding</keyword>
<comment type="function">
    <text evidence="1">Binds directly to 23S rRNA. The L1 stalk is quite mobile in the ribosome, and is involved in E site tRNA release.</text>
</comment>
<comment type="function">
    <text evidence="1">Protein L1 is also a translational repressor protein, it controls the translation of the L11 operon by binding to its mRNA.</text>
</comment>
<comment type="subunit">
    <text evidence="1">Part of the 50S ribosomal subunit.</text>
</comment>
<comment type="similarity">
    <text evidence="1">Belongs to the universal ribosomal protein uL1 family.</text>
</comment>
<protein>
    <recommendedName>
        <fullName evidence="1">Large ribosomal subunit protein uL1</fullName>
    </recommendedName>
    <alternativeName>
        <fullName evidence="2">50S ribosomal protein L1</fullName>
    </alternativeName>
</protein>
<proteinExistence type="inferred from homology"/>
<gene>
    <name evidence="1" type="primary">rplA</name>
    <name type="ordered locus">SYNAS_02900</name>
    <name type="ORF">SYN_00068</name>
</gene>
<dbReference type="EMBL" id="CP000252">
    <property type="protein sequence ID" value="ABC76169.1"/>
    <property type="molecule type" value="Genomic_DNA"/>
</dbReference>
<dbReference type="RefSeq" id="WP_011416203.1">
    <property type="nucleotide sequence ID" value="NC_007759.1"/>
</dbReference>
<dbReference type="SMR" id="Q2LQ90"/>
<dbReference type="FunCoup" id="Q2LQ90">
    <property type="interactions" value="596"/>
</dbReference>
<dbReference type="STRING" id="56780.SYN_00068"/>
<dbReference type="KEGG" id="sat:SYN_00068"/>
<dbReference type="eggNOG" id="COG0081">
    <property type="taxonomic scope" value="Bacteria"/>
</dbReference>
<dbReference type="HOGENOM" id="CLU_062853_0_0_7"/>
<dbReference type="InParanoid" id="Q2LQ90"/>
<dbReference type="OrthoDB" id="9803740at2"/>
<dbReference type="Proteomes" id="UP000001933">
    <property type="component" value="Chromosome"/>
</dbReference>
<dbReference type="GO" id="GO:0022625">
    <property type="term" value="C:cytosolic large ribosomal subunit"/>
    <property type="evidence" value="ECO:0007669"/>
    <property type="project" value="TreeGrafter"/>
</dbReference>
<dbReference type="GO" id="GO:0019843">
    <property type="term" value="F:rRNA binding"/>
    <property type="evidence" value="ECO:0007669"/>
    <property type="project" value="UniProtKB-UniRule"/>
</dbReference>
<dbReference type="GO" id="GO:0003735">
    <property type="term" value="F:structural constituent of ribosome"/>
    <property type="evidence" value="ECO:0007669"/>
    <property type="project" value="InterPro"/>
</dbReference>
<dbReference type="GO" id="GO:0000049">
    <property type="term" value="F:tRNA binding"/>
    <property type="evidence" value="ECO:0007669"/>
    <property type="project" value="UniProtKB-KW"/>
</dbReference>
<dbReference type="GO" id="GO:0006417">
    <property type="term" value="P:regulation of translation"/>
    <property type="evidence" value="ECO:0007669"/>
    <property type="project" value="UniProtKB-KW"/>
</dbReference>
<dbReference type="GO" id="GO:0006412">
    <property type="term" value="P:translation"/>
    <property type="evidence" value="ECO:0007669"/>
    <property type="project" value="UniProtKB-UniRule"/>
</dbReference>
<dbReference type="CDD" id="cd00403">
    <property type="entry name" value="Ribosomal_L1"/>
    <property type="match status" value="1"/>
</dbReference>
<dbReference type="FunFam" id="3.40.50.790:FF:000001">
    <property type="entry name" value="50S ribosomal protein L1"/>
    <property type="match status" value="1"/>
</dbReference>
<dbReference type="Gene3D" id="3.30.190.20">
    <property type="match status" value="1"/>
</dbReference>
<dbReference type="Gene3D" id="3.40.50.790">
    <property type="match status" value="1"/>
</dbReference>
<dbReference type="HAMAP" id="MF_01318_B">
    <property type="entry name" value="Ribosomal_uL1_B"/>
    <property type="match status" value="1"/>
</dbReference>
<dbReference type="InterPro" id="IPR005878">
    <property type="entry name" value="Ribosom_uL1_bac-type"/>
</dbReference>
<dbReference type="InterPro" id="IPR002143">
    <property type="entry name" value="Ribosomal_uL1"/>
</dbReference>
<dbReference type="InterPro" id="IPR023674">
    <property type="entry name" value="Ribosomal_uL1-like"/>
</dbReference>
<dbReference type="InterPro" id="IPR028364">
    <property type="entry name" value="Ribosomal_uL1/biogenesis"/>
</dbReference>
<dbReference type="InterPro" id="IPR016095">
    <property type="entry name" value="Ribosomal_uL1_3-a/b-sand"/>
</dbReference>
<dbReference type="InterPro" id="IPR023673">
    <property type="entry name" value="Ribosomal_uL1_CS"/>
</dbReference>
<dbReference type="NCBIfam" id="TIGR01169">
    <property type="entry name" value="rplA_bact"/>
    <property type="match status" value="1"/>
</dbReference>
<dbReference type="PANTHER" id="PTHR36427">
    <property type="entry name" value="54S RIBOSOMAL PROTEIN L1, MITOCHONDRIAL"/>
    <property type="match status" value="1"/>
</dbReference>
<dbReference type="PANTHER" id="PTHR36427:SF3">
    <property type="entry name" value="LARGE RIBOSOMAL SUBUNIT PROTEIN UL1M"/>
    <property type="match status" value="1"/>
</dbReference>
<dbReference type="Pfam" id="PF00687">
    <property type="entry name" value="Ribosomal_L1"/>
    <property type="match status" value="1"/>
</dbReference>
<dbReference type="PIRSF" id="PIRSF002155">
    <property type="entry name" value="Ribosomal_L1"/>
    <property type="match status" value="1"/>
</dbReference>
<dbReference type="SUPFAM" id="SSF56808">
    <property type="entry name" value="Ribosomal protein L1"/>
    <property type="match status" value="1"/>
</dbReference>
<dbReference type="PROSITE" id="PS01199">
    <property type="entry name" value="RIBOSOMAL_L1"/>
    <property type="match status" value="1"/>
</dbReference>
<feature type="chain" id="PRO_0000308134" description="Large ribosomal subunit protein uL1">
    <location>
        <begin position="1"/>
        <end position="232"/>
    </location>
</feature>
<sequence length="232" mass="24917">MSRRGKVYLNARGKVEAGRRYTLSEALALVTDTARAKFDETVEAAVRLGVNPAHADQMVRGSVVLPNGLGKTVRVLVFAKGEKEKEALDAGADYAGSDEFIEKIKSGWLEFDRVIATPDMMGNVGKLGKILGPRGLMPNPKVGTVTFDVATAVKEVKAGKVEFRVEKAGIVHSPVGKVSFGPDRLMENIQALIEMIIKLKPATSKGTYIKGIALSSTMGPGVRVDPLDLRNL</sequence>
<organism>
    <name type="scientific">Syntrophus aciditrophicus (strain SB)</name>
    <dbReference type="NCBI Taxonomy" id="56780"/>
    <lineage>
        <taxon>Bacteria</taxon>
        <taxon>Pseudomonadati</taxon>
        <taxon>Thermodesulfobacteriota</taxon>
        <taxon>Syntrophia</taxon>
        <taxon>Syntrophales</taxon>
        <taxon>Syntrophaceae</taxon>
        <taxon>Syntrophus</taxon>
    </lineage>
</organism>
<name>RL1_SYNAS</name>
<reference key="1">
    <citation type="journal article" date="2007" name="Proc. Natl. Acad. Sci. U.S.A.">
        <title>The genome of Syntrophus aciditrophicus: life at the thermodynamic limit of microbial growth.</title>
        <authorList>
            <person name="McInerney M.J."/>
            <person name="Rohlin L."/>
            <person name="Mouttaki H."/>
            <person name="Kim U."/>
            <person name="Krupp R.S."/>
            <person name="Rios-Hernandez L."/>
            <person name="Sieber J."/>
            <person name="Struchtemeyer C.G."/>
            <person name="Bhattacharyya A."/>
            <person name="Campbell J.W."/>
            <person name="Gunsalus R.P."/>
        </authorList>
    </citation>
    <scope>NUCLEOTIDE SEQUENCE [LARGE SCALE GENOMIC DNA]</scope>
    <source>
        <strain>SB</strain>
    </source>
</reference>
<accession>Q2LQ90</accession>
<evidence type="ECO:0000255" key="1">
    <source>
        <dbReference type="HAMAP-Rule" id="MF_01318"/>
    </source>
</evidence>
<evidence type="ECO:0000305" key="2"/>